<accession>Q8C0I1</accession>
<comment type="function">
    <text evidence="6">Catalyzes the exchange of the acyl chain in acyl-dihydroxyacetonephosphate (acyl-DHAP) for a long chain fatty alcohol, yielding the first ether linked intermediate, i.e. alkyl-dihydroxyacetonephosphate (alkyl-DHAP), in the pathway of ether lipid biosynthesis.</text>
</comment>
<comment type="catalytic activity">
    <reaction evidence="6">
        <text>a long chain fatty alcohol + a 1-acylglycerone 3-phosphate = a 1-O-alkylglycerone 3-phosphate + a long-chain fatty acid + H(+)</text>
        <dbReference type="Rhea" id="RHEA:36171"/>
        <dbReference type="ChEBI" id="CHEBI:15378"/>
        <dbReference type="ChEBI" id="CHEBI:17135"/>
        <dbReference type="ChEBI" id="CHEBI:57534"/>
        <dbReference type="ChEBI" id="CHEBI:57560"/>
        <dbReference type="ChEBI" id="CHEBI:73315"/>
        <dbReference type="EC" id="2.5.1.26"/>
    </reaction>
    <physiologicalReaction direction="left-to-right" evidence="8">
        <dbReference type="Rhea" id="RHEA:36172"/>
    </physiologicalReaction>
</comment>
<comment type="catalytic activity">
    <reaction evidence="6">
        <text>hexadecan-1-ol + 1-hexadecanoylglycerone 3-phosphate = 1-O-hexadecylglycerone 3-phosphate + hexadecanoate + H(+)</text>
        <dbReference type="Rhea" id="RHEA:40659"/>
        <dbReference type="ChEBI" id="CHEBI:7896"/>
        <dbReference type="ChEBI" id="CHEBI:15378"/>
        <dbReference type="ChEBI" id="CHEBI:16125"/>
        <dbReference type="ChEBI" id="CHEBI:58303"/>
        <dbReference type="ChEBI" id="CHEBI:77429"/>
    </reaction>
    <physiologicalReaction direction="left-to-right" evidence="8">
        <dbReference type="Rhea" id="RHEA:40660"/>
    </physiologicalReaction>
</comment>
<comment type="catalytic activity">
    <reaction evidence="6">
        <text>1-hexadecanoylglycerone 3-phosphate + a long-chain fatty acid = a 1-acylglycerone 3-phosphate + hexadecanoate</text>
        <dbReference type="Rhea" id="RHEA:40727"/>
        <dbReference type="ChEBI" id="CHEBI:7896"/>
        <dbReference type="ChEBI" id="CHEBI:57534"/>
        <dbReference type="ChEBI" id="CHEBI:57560"/>
        <dbReference type="ChEBI" id="CHEBI:58303"/>
    </reaction>
    <physiologicalReaction direction="left-to-right" evidence="8">
        <dbReference type="Rhea" id="RHEA:40728"/>
    </physiologicalReaction>
</comment>
<comment type="cofactor">
    <cofactor evidence="3">
        <name>FAD</name>
        <dbReference type="ChEBI" id="CHEBI:57692"/>
    </cofactor>
</comment>
<comment type="pathway">
    <text>Glycerolipid metabolism; ether lipid biosynthesis.</text>
</comment>
<comment type="subunit">
    <text evidence="3">Homodimer.</text>
</comment>
<comment type="subcellular location">
    <subcellularLocation>
        <location evidence="3">Peroxisome membrane</location>
    </subcellularLocation>
    <subcellularLocation>
        <location evidence="3">Peroxisome</location>
    </subcellularLocation>
</comment>
<comment type="similarity">
    <text evidence="7">Belongs to the FAD-binding oxidoreductase/transferase type 4 family.</text>
</comment>
<keyword id="KW-0007">Acetylation</keyword>
<keyword id="KW-0274">FAD</keyword>
<keyword id="KW-0285">Flavoprotein</keyword>
<keyword id="KW-0444">Lipid biosynthesis</keyword>
<keyword id="KW-0443">Lipid metabolism</keyword>
<keyword id="KW-0472">Membrane</keyword>
<keyword id="KW-0576">Peroxisome</keyword>
<keyword id="KW-0597">Phosphoprotein</keyword>
<keyword id="KW-1185">Reference proteome</keyword>
<keyword id="KW-0808">Transferase</keyword>
<keyword id="KW-0809">Transit peptide</keyword>
<reference key="1">
    <citation type="journal article" date="2005" name="Science">
        <title>The transcriptional landscape of the mammalian genome.</title>
        <authorList>
            <person name="Carninci P."/>
            <person name="Kasukawa T."/>
            <person name="Katayama S."/>
            <person name="Gough J."/>
            <person name="Frith M.C."/>
            <person name="Maeda N."/>
            <person name="Oyama R."/>
            <person name="Ravasi T."/>
            <person name="Lenhard B."/>
            <person name="Wells C."/>
            <person name="Kodzius R."/>
            <person name="Shimokawa K."/>
            <person name="Bajic V.B."/>
            <person name="Brenner S.E."/>
            <person name="Batalov S."/>
            <person name="Forrest A.R."/>
            <person name="Zavolan M."/>
            <person name="Davis M.J."/>
            <person name="Wilming L.G."/>
            <person name="Aidinis V."/>
            <person name="Allen J.E."/>
            <person name="Ambesi-Impiombato A."/>
            <person name="Apweiler R."/>
            <person name="Aturaliya R.N."/>
            <person name="Bailey T.L."/>
            <person name="Bansal M."/>
            <person name="Baxter L."/>
            <person name="Beisel K.W."/>
            <person name="Bersano T."/>
            <person name="Bono H."/>
            <person name="Chalk A.M."/>
            <person name="Chiu K.P."/>
            <person name="Choudhary V."/>
            <person name="Christoffels A."/>
            <person name="Clutterbuck D.R."/>
            <person name="Crowe M.L."/>
            <person name="Dalla E."/>
            <person name="Dalrymple B.P."/>
            <person name="de Bono B."/>
            <person name="Della Gatta G."/>
            <person name="di Bernardo D."/>
            <person name="Down T."/>
            <person name="Engstrom P."/>
            <person name="Fagiolini M."/>
            <person name="Faulkner G."/>
            <person name="Fletcher C.F."/>
            <person name="Fukushima T."/>
            <person name="Furuno M."/>
            <person name="Futaki S."/>
            <person name="Gariboldi M."/>
            <person name="Georgii-Hemming P."/>
            <person name="Gingeras T.R."/>
            <person name="Gojobori T."/>
            <person name="Green R.E."/>
            <person name="Gustincich S."/>
            <person name="Harbers M."/>
            <person name="Hayashi Y."/>
            <person name="Hensch T.K."/>
            <person name="Hirokawa N."/>
            <person name="Hill D."/>
            <person name="Huminiecki L."/>
            <person name="Iacono M."/>
            <person name="Ikeo K."/>
            <person name="Iwama A."/>
            <person name="Ishikawa T."/>
            <person name="Jakt M."/>
            <person name="Kanapin A."/>
            <person name="Katoh M."/>
            <person name="Kawasawa Y."/>
            <person name="Kelso J."/>
            <person name="Kitamura H."/>
            <person name="Kitano H."/>
            <person name="Kollias G."/>
            <person name="Krishnan S.P."/>
            <person name="Kruger A."/>
            <person name="Kummerfeld S.K."/>
            <person name="Kurochkin I.V."/>
            <person name="Lareau L.F."/>
            <person name="Lazarevic D."/>
            <person name="Lipovich L."/>
            <person name="Liu J."/>
            <person name="Liuni S."/>
            <person name="McWilliam S."/>
            <person name="Madan Babu M."/>
            <person name="Madera M."/>
            <person name="Marchionni L."/>
            <person name="Matsuda H."/>
            <person name="Matsuzawa S."/>
            <person name="Miki H."/>
            <person name="Mignone F."/>
            <person name="Miyake S."/>
            <person name="Morris K."/>
            <person name="Mottagui-Tabar S."/>
            <person name="Mulder N."/>
            <person name="Nakano N."/>
            <person name="Nakauchi H."/>
            <person name="Ng P."/>
            <person name="Nilsson R."/>
            <person name="Nishiguchi S."/>
            <person name="Nishikawa S."/>
            <person name="Nori F."/>
            <person name="Ohara O."/>
            <person name="Okazaki Y."/>
            <person name="Orlando V."/>
            <person name="Pang K.C."/>
            <person name="Pavan W.J."/>
            <person name="Pavesi G."/>
            <person name="Pesole G."/>
            <person name="Petrovsky N."/>
            <person name="Piazza S."/>
            <person name="Reed J."/>
            <person name="Reid J.F."/>
            <person name="Ring B.Z."/>
            <person name="Ringwald M."/>
            <person name="Rost B."/>
            <person name="Ruan Y."/>
            <person name="Salzberg S.L."/>
            <person name="Sandelin A."/>
            <person name="Schneider C."/>
            <person name="Schoenbach C."/>
            <person name="Sekiguchi K."/>
            <person name="Semple C.A."/>
            <person name="Seno S."/>
            <person name="Sessa L."/>
            <person name="Sheng Y."/>
            <person name="Shibata Y."/>
            <person name="Shimada H."/>
            <person name="Shimada K."/>
            <person name="Silva D."/>
            <person name="Sinclair B."/>
            <person name="Sperling S."/>
            <person name="Stupka E."/>
            <person name="Sugiura K."/>
            <person name="Sultana R."/>
            <person name="Takenaka Y."/>
            <person name="Taki K."/>
            <person name="Tammoja K."/>
            <person name="Tan S.L."/>
            <person name="Tang S."/>
            <person name="Taylor M.S."/>
            <person name="Tegner J."/>
            <person name="Teichmann S.A."/>
            <person name="Ueda H.R."/>
            <person name="van Nimwegen E."/>
            <person name="Verardo R."/>
            <person name="Wei C.L."/>
            <person name="Yagi K."/>
            <person name="Yamanishi H."/>
            <person name="Zabarovsky E."/>
            <person name="Zhu S."/>
            <person name="Zimmer A."/>
            <person name="Hide W."/>
            <person name="Bult C."/>
            <person name="Grimmond S.M."/>
            <person name="Teasdale R.D."/>
            <person name="Liu E.T."/>
            <person name="Brusic V."/>
            <person name="Quackenbush J."/>
            <person name="Wahlestedt C."/>
            <person name="Mattick J.S."/>
            <person name="Hume D.A."/>
            <person name="Kai C."/>
            <person name="Sasaki D."/>
            <person name="Tomaru Y."/>
            <person name="Fukuda S."/>
            <person name="Kanamori-Katayama M."/>
            <person name="Suzuki M."/>
            <person name="Aoki J."/>
            <person name="Arakawa T."/>
            <person name="Iida J."/>
            <person name="Imamura K."/>
            <person name="Itoh M."/>
            <person name="Kato T."/>
            <person name="Kawaji H."/>
            <person name="Kawagashira N."/>
            <person name="Kawashima T."/>
            <person name="Kojima M."/>
            <person name="Kondo S."/>
            <person name="Konno H."/>
            <person name="Nakano K."/>
            <person name="Ninomiya N."/>
            <person name="Nishio T."/>
            <person name="Okada M."/>
            <person name="Plessy C."/>
            <person name="Shibata K."/>
            <person name="Shiraki T."/>
            <person name="Suzuki S."/>
            <person name="Tagami M."/>
            <person name="Waki K."/>
            <person name="Watahiki A."/>
            <person name="Okamura-Oho Y."/>
            <person name="Suzuki H."/>
            <person name="Kawai J."/>
            <person name="Hayashizaki Y."/>
        </authorList>
    </citation>
    <scope>NUCLEOTIDE SEQUENCE [LARGE SCALE MRNA]</scope>
    <source>
        <strain>C57BL/6J</strain>
        <tissue>Thymus</tissue>
    </source>
</reference>
<reference key="2">
    <citation type="journal article" date="2004" name="Genome Res.">
        <title>The status, quality, and expansion of the NIH full-length cDNA project: the Mammalian Gene Collection (MGC).</title>
        <authorList>
            <consortium name="The MGC Project Team"/>
        </authorList>
    </citation>
    <scope>NUCLEOTIDE SEQUENCE [LARGE SCALE MRNA]</scope>
    <source>
        <tissue>Embryo</tissue>
    </source>
</reference>
<reference key="3">
    <citation type="journal article" date="2004" name="Mol. Cell. Proteomics">
        <title>Phosphoproteomic analysis of the developing mouse brain.</title>
        <authorList>
            <person name="Ballif B.A."/>
            <person name="Villen J."/>
            <person name="Beausoleil S.A."/>
            <person name="Schwartz D."/>
            <person name="Gygi S.P."/>
        </authorList>
    </citation>
    <scope>PHOSPHORYLATION [LARGE SCALE ANALYSIS] AT SER-57</scope>
    <scope>IDENTIFICATION BY MASS SPECTROMETRY [LARGE SCALE ANALYSIS]</scope>
    <source>
        <tissue>Embryonic brain</tissue>
    </source>
</reference>
<reference key="4">
    <citation type="journal article" date="1983" name="J. Biol. Chem.">
        <title>The mechanism of alkyldihydroxyacetone-P synthase. Formation of [3H]H2O from acyl[1-R-3H]dihydroxyacetone-P by purified alkyldihydroxyacetone-P synthase in the absence of acylhydrolase activity.</title>
        <authorList>
            <person name="Brown A.J."/>
            <person name="Snyder F."/>
        </authorList>
    </citation>
    <scope>FUNCTION</scope>
    <scope>CATALYTIC ACTIVITY</scope>
</reference>
<reference key="5">
    <citation type="journal article" date="2007" name="Proc. Natl. Acad. Sci. U.S.A.">
        <title>Large-scale phosphorylation analysis of mouse liver.</title>
        <authorList>
            <person name="Villen J."/>
            <person name="Beausoleil S.A."/>
            <person name="Gerber S.A."/>
            <person name="Gygi S.P."/>
        </authorList>
    </citation>
    <scope>PHOSPHORYLATION [LARGE SCALE ANALYSIS] AT SER-57</scope>
    <scope>IDENTIFICATION BY MASS SPECTROMETRY [LARGE SCALE ANALYSIS]</scope>
    <source>
        <tissue>Liver</tissue>
    </source>
</reference>
<reference key="6">
    <citation type="journal article" date="2010" name="Cell">
        <title>A tissue-specific atlas of mouse protein phosphorylation and expression.</title>
        <authorList>
            <person name="Huttlin E.L."/>
            <person name="Jedrychowski M.P."/>
            <person name="Elias J.E."/>
            <person name="Goswami T."/>
            <person name="Rad R."/>
            <person name="Beausoleil S.A."/>
            <person name="Villen J."/>
            <person name="Haas W."/>
            <person name="Sowa M.E."/>
            <person name="Gygi S.P."/>
        </authorList>
    </citation>
    <scope>PHOSPHORYLATION [LARGE SCALE ANALYSIS] AT SER-52 AND SER-57</scope>
    <scope>IDENTIFICATION BY MASS SPECTROMETRY [LARGE SCALE ANALYSIS]</scope>
    <source>
        <tissue>Brain</tissue>
        <tissue>Brown adipose tissue</tissue>
        <tissue>Heart</tissue>
        <tissue>Kidney</tissue>
        <tissue>Liver</tissue>
        <tissue>Lung</tissue>
        <tissue>Pancreas</tissue>
        <tissue>Spleen</tissue>
        <tissue>Testis</tissue>
    </source>
</reference>
<organism>
    <name type="scientific">Mus musculus</name>
    <name type="common">Mouse</name>
    <dbReference type="NCBI Taxonomy" id="10090"/>
    <lineage>
        <taxon>Eukaryota</taxon>
        <taxon>Metazoa</taxon>
        <taxon>Chordata</taxon>
        <taxon>Craniata</taxon>
        <taxon>Vertebrata</taxon>
        <taxon>Euteleostomi</taxon>
        <taxon>Mammalia</taxon>
        <taxon>Eutheria</taxon>
        <taxon>Euarchontoglires</taxon>
        <taxon>Glires</taxon>
        <taxon>Rodentia</taxon>
        <taxon>Myomorpha</taxon>
        <taxon>Muroidea</taxon>
        <taxon>Muridae</taxon>
        <taxon>Murinae</taxon>
        <taxon>Mus</taxon>
        <taxon>Mus</taxon>
    </lineage>
</organism>
<dbReference type="EC" id="2.5.1.26" evidence="6"/>
<dbReference type="EMBL" id="AK031049">
    <property type="protein sequence ID" value="BAC27229.1"/>
    <property type="molecule type" value="mRNA"/>
</dbReference>
<dbReference type="EMBL" id="BC063086">
    <property type="protein sequence ID" value="AAH63086.1"/>
    <property type="molecule type" value="mRNA"/>
</dbReference>
<dbReference type="RefSeq" id="NP_766254.2">
    <property type="nucleotide sequence ID" value="NM_172666.3"/>
</dbReference>
<dbReference type="SMR" id="Q8C0I1"/>
<dbReference type="BioGRID" id="230710">
    <property type="interactions" value="7"/>
</dbReference>
<dbReference type="FunCoup" id="Q8C0I1">
    <property type="interactions" value="2699"/>
</dbReference>
<dbReference type="IntAct" id="Q8C0I1">
    <property type="interactions" value="1"/>
</dbReference>
<dbReference type="STRING" id="10090.ENSMUSP00000041967"/>
<dbReference type="SwissLipids" id="SLP:000000608"/>
<dbReference type="GlyGen" id="Q8C0I1">
    <property type="glycosylation" value="2 sites"/>
</dbReference>
<dbReference type="iPTMnet" id="Q8C0I1"/>
<dbReference type="PhosphoSitePlus" id="Q8C0I1"/>
<dbReference type="jPOST" id="Q8C0I1"/>
<dbReference type="PaxDb" id="10090-ENSMUSP00000041967"/>
<dbReference type="ProteomicsDB" id="285675"/>
<dbReference type="Pumba" id="Q8C0I1"/>
<dbReference type="DNASU" id="228061"/>
<dbReference type="GeneID" id="228061"/>
<dbReference type="KEGG" id="mmu:228061"/>
<dbReference type="AGR" id="MGI:2443065"/>
<dbReference type="CTD" id="8540"/>
<dbReference type="MGI" id="MGI:2443065">
    <property type="gene designation" value="Agps"/>
</dbReference>
<dbReference type="eggNOG" id="KOG1233">
    <property type="taxonomic scope" value="Eukaryota"/>
</dbReference>
<dbReference type="InParanoid" id="Q8C0I1"/>
<dbReference type="OrthoDB" id="7786253at2759"/>
<dbReference type="BRENDA" id="2.5.1.26">
    <property type="organism ID" value="3474"/>
</dbReference>
<dbReference type="Reactome" id="R-MMU-75896">
    <property type="pathway name" value="Plasmalogen biosynthesis"/>
</dbReference>
<dbReference type="Reactome" id="R-MMU-9033241">
    <property type="pathway name" value="Peroxisomal protein import"/>
</dbReference>
<dbReference type="UniPathway" id="UPA00781"/>
<dbReference type="BioGRID-ORCS" id="228061">
    <property type="hits" value="6 hits in 80 CRISPR screens"/>
</dbReference>
<dbReference type="ChiTaRS" id="Agps">
    <property type="organism name" value="mouse"/>
</dbReference>
<dbReference type="PRO" id="PR:Q8C0I1"/>
<dbReference type="Proteomes" id="UP000000589">
    <property type="component" value="Unplaced"/>
</dbReference>
<dbReference type="RNAct" id="Q8C0I1">
    <property type="molecule type" value="protein"/>
</dbReference>
<dbReference type="GO" id="GO:0005739">
    <property type="term" value="C:mitochondrion"/>
    <property type="evidence" value="ECO:0007005"/>
    <property type="project" value="MGI"/>
</dbReference>
<dbReference type="GO" id="GO:0005782">
    <property type="term" value="C:peroxisomal matrix"/>
    <property type="evidence" value="ECO:0000304"/>
    <property type="project" value="Reactome"/>
</dbReference>
<dbReference type="GO" id="GO:0005778">
    <property type="term" value="C:peroxisomal membrane"/>
    <property type="evidence" value="ECO:0007669"/>
    <property type="project" value="UniProtKB-SubCell"/>
</dbReference>
<dbReference type="GO" id="GO:0005777">
    <property type="term" value="C:peroxisome"/>
    <property type="evidence" value="ECO:0000266"/>
    <property type="project" value="MGI"/>
</dbReference>
<dbReference type="GO" id="GO:0008609">
    <property type="term" value="F:alkylglycerone-phosphate synthase activity"/>
    <property type="evidence" value="ECO:0000250"/>
    <property type="project" value="UniProtKB"/>
</dbReference>
<dbReference type="GO" id="GO:0071949">
    <property type="term" value="F:FAD binding"/>
    <property type="evidence" value="ECO:0000250"/>
    <property type="project" value="UniProtKB"/>
</dbReference>
<dbReference type="GO" id="GO:0008611">
    <property type="term" value="P:ether lipid biosynthetic process"/>
    <property type="evidence" value="ECO:0000250"/>
    <property type="project" value="UniProtKB"/>
</dbReference>
<dbReference type="GO" id="GO:0008610">
    <property type="term" value="P:lipid biosynthetic process"/>
    <property type="evidence" value="ECO:0000266"/>
    <property type="project" value="MGI"/>
</dbReference>
<dbReference type="FunFam" id="1.10.45.10:FF:000002">
    <property type="entry name" value="Alkylglycerone-phosphate synthase"/>
    <property type="match status" value="1"/>
</dbReference>
<dbReference type="FunFam" id="3.30.300.330:FF:000001">
    <property type="entry name" value="Alkylglycerone-phosphate synthase"/>
    <property type="match status" value="1"/>
</dbReference>
<dbReference type="FunFam" id="3.30.43.10:FF:000003">
    <property type="entry name" value="Alkylglycerone-phosphate synthase"/>
    <property type="match status" value="1"/>
</dbReference>
<dbReference type="FunFam" id="3.30.465.10:FF:000011">
    <property type="entry name" value="Alkylglycerone-phosphate synthase"/>
    <property type="match status" value="1"/>
</dbReference>
<dbReference type="FunFam" id="3.30.70.3450:FF:000001">
    <property type="entry name" value="Alkylglycerone-phosphate synthase"/>
    <property type="match status" value="1"/>
</dbReference>
<dbReference type="Gene3D" id="3.30.160.650">
    <property type="match status" value="1"/>
</dbReference>
<dbReference type="Gene3D" id="3.30.300.330">
    <property type="match status" value="1"/>
</dbReference>
<dbReference type="Gene3D" id="3.30.465.10">
    <property type="match status" value="1"/>
</dbReference>
<dbReference type="Gene3D" id="3.30.70.3450">
    <property type="match status" value="1"/>
</dbReference>
<dbReference type="Gene3D" id="3.30.43.10">
    <property type="entry name" value="Uridine Diphospho-n-acetylenolpyruvylglucosamine Reductase, domain 2"/>
    <property type="match status" value="1"/>
</dbReference>
<dbReference type="Gene3D" id="1.10.45.10">
    <property type="entry name" value="Vanillyl-alcohol Oxidase, Chain A, domain 4"/>
    <property type="match status" value="1"/>
</dbReference>
<dbReference type="InterPro" id="IPR025650">
    <property type="entry name" value="Alkyl-DHAP_Synthase"/>
</dbReference>
<dbReference type="InterPro" id="IPR004113">
    <property type="entry name" value="FAD-bd_oxidored_4_C"/>
</dbReference>
<dbReference type="InterPro" id="IPR016166">
    <property type="entry name" value="FAD-bd_PCMH"/>
</dbReference>
<dbReference type="InterPro" id="IPR036318">
    <property type="entry name" value="FAD-bd_PCMH-like_sf"/>
</dbReference>
<dbReference type="InterPro" id="IPR016167">
    <property type="entry name" value="FAD-bd_PCMH_sub1"/>
</dbReference>
<dbReference type="InterPro" id="IPR016169">
    <property type="entry name" value="FAD-bd_PCMH_sub2"/>
</dbReference>
<dbReference type="InterPro" id="IPR016164">
    <property type="entry name" value="FAD-linked_Oxase-like_C"/>
</dbReference>
<dbReference type="InterPro" id="IPR006094">
    <property type="entry name" value="Oxid_FAD_bind_N"/>
</dbReference>
<dbReference type="InterPro" id="IPR016171">
    <property type="entry name" value="Vanillyl_alc_oxidase_C-sub2"/>
</dbReference>
<dbReference type="PANTHER" id="PTHR46568">
    <property type="entry name" value="ALKYLDIHYDROXYACETONEPHOSPHATE SYNTHASE, PEROXISOMAL"/>
    <property type="match status" value="1"/>
</dbReference>
<dbReference type="PANTHER" id="PTHR46568:SF1">
    <property type="entry name" value="ALKYLDIHYDROXYACETONEPHOSPHATE SYNTHASE, PEROXISOMAL"/>
    <property type="match status" value="1"/>
</dbReference>
<dbReference type="Pfam" id="PF02913">
    <property type="entry name" value="FAD-oxidase_C"/>
    <property type="match status" value="1"/>
</dbReference>
<dbReference type="Pfam" id="PF01565">
    <property type="entry name" value="FAD_binding_4"/>
    <property type="match status" value="1"/>
</dbReference>
<dbReference type="SUPFAM" id="SSF56176">
    <property type="entry name" value="FAD-binding/transporter-associated domain-like"/>
    <property type="match status" value="1"/>
</dbReference>
<dbReference type="SUPFAM" id="SSF55103">
    <property type="entry name" value="FAD-linked oxidases, C-terminal domain"/>
    <property type="match status" value="1"/>
</dbReference>
<dbReference type="PROSITE" id="PS51387">
    <property type="entry name" value="FAD_PCMH"/>
    <property type="match status" value="1"/>
</dbReference>
<protein>
    <recommendedName>
        <fullName>Alkyldihydroxyacetonephosphate synthase, peroxisomal</fullName>
        <shortName>Alkyl-DHAP synthase</shortName>
        <ecNumber evidence="6">2.5.1.26</ecNumber>
    </recommendedName>
    <alternativeName>
        <fullName>Alkylglycerone-phosphate synthase</fullName>
    </alternativeName>
</protein>
<proteinExistence type="evidence at protein level"/>
<sequence>MAEAAAGEAGASERDPDAGRARRRLRVLSGHLLGRPQEAPSTNECKARRAASAAGASPAATPAAPESGTIPKKRQEVMKWNGWGYNDSKFLLNKKGQVELTGKRYPLSGLVLPTLRDWIQNTLGVSLEHKTTSKTSINPSEAPPSIVNEDFLQELKEARISYSQEADDRVFRAHGHCLHEIFLLREGMFERIPDIVVWPTCHDDVVKIVNLACKYNLCIIPIGGGTSVSYGLMCPADETRTIISLDTSQMNRILWVDENNLTAHVEAGITGQDLERQLKESGYCTGHEPDSLEFSTVGGWISTRASGMKKNIYGNIEDLVVHMKMVTPRGVIEKSSQGPRMSTGPDIHHFIMGSEGTLGVITEATIKIRPTPEYQKYGSVAFPNFEQGVACLREIAKQRCAPASIRLMDNQQFQFGHALKPQVSSIFTSFLDGLKKFYITKFKGFDPNQISVATLLFEGDREKVLQHEKQVYDIAAKFGGLAAGEDNGQRGYLLTYVIAYIRDLGLEYYVIGESFETSAPWDRVIDLCRNVKERIRRECKERGVQFAPLSTCRVTQTYDAGACIYFYFAFNYRGISDPLTVFEHTEAAAREEILANGGSLSHHHGVGKIRKQWLKESISDVGFGMLKSVKEYVDPSNIFGNRNLL</sequence>
<evidence type="ECO:0000250" key="1"/>
<evidence type="ECO:0000250" key="2">
    <source>
        <dbReference type="UniProtKB" id="O00116"/>
    </source>
</evidence>
<evidence type="ECO:0000250" key="3">
    <source>
        <dbReference type="UniProtKB" id="P97275"/>
    </source>
</evidence>
<evidence type="ECO:0000255" key="4">
    <source>
        <dbReference type="PROSITE-ProRule" id="PRU00718"/>
    </source>
</evidence>
<evidence type="ECO:0000256" key="5">
    <source>
        <dbReference type="SAM" id="MobiDB-lite"/>
    </source>
</evidence>
<evidence type="ECO:0000269" key="6">
    <source>
    </source>
</evidence>
<evidence type="ECO:0000305" key="7"/>
<evidence type="ECO:0000305" key="8">
    <source>
    </source>
</evidence>
<evidence type="ECO:0007744" key="9">
    <source>
    </source>
</evidence>
<evidence type="ECO:0007744" key="10">
    <source>
    </source>
</evidence>
<evidence type="ECO:0007744" key="11">
    <source>
    </source>
</evidence>
<feature type="transit peptide" description="Peroxisome" evidence="1">
    <location>
        <begin position="1"/>
        <end position="45"/>
    </location>
</feature>
<feature type="chain" id="PRO_0000231676" description="Alkyldihydroxyacetonephosphate synthase, peroxisomal">
    <location>
        <begin position="46"/>
        <end position="645"/>
    </location>
</feature>
<feature type="domain" description="FAD-binding PCMH-type" evidence="4">
    <location>
        <begin position="189"/>
        <end position="371"/>
    </location>
</feature>
<feature type="region of interest" description="Disordered" evidence="5">
    <location>
        <begin position="1"/>
        <end position="72"/>
    </location>
</feature>
<feature type="region of interest" description="Important for enzyme activity" evidence="3">
    <location>
        <begin position="602"/>
        <end position="604"/>
    </location>
</feature>
<feature type="region of interest" description="Important for enzyme activity" evidence="3">
    <location>
        <begin position="641"/>
        <end position="645"/>
    </location>
</feature>
<feature type="compositionally biased region" description="Low complexity" evidence="5">
    <location>
        <begin position="1"/>
        <end position="10"/>
    </location>
</feature>
<feature type="compositionally biased region" description="Basic and acidic residues" evidence="5">
    <location>
        <begin position="11"/>
        <end position="20"/>
    </location>
</feature>
<feature type="compositionally biased region" description="Low complexity" evidence="5">
    <location>
        <begin position="50"/>
        <end position="69"/>
    </location>
</feature>
<feature type="active site" description="Proton donor/acceptor" evidence="3">
    <location>
        <position position="565"/>
    </location>
</feature>
<feature type="binding site" evidence="3">
    <location>
        <begin position="221"/>
        <end position="227"/>
    </location>
    <ligand>
        <name>FAD</name>
        <dbReference type="ChEBI" id="CHEBI:57692"/>
    </ligand>
</feature>
<feature type="binding site" evidence="3">
    <location>
        <begin position="290"/>
        <end position="296"/>
    </location>
    <ligand>
        <name>FAD</name>
        <dbReference type="ChEBI" id="CHEBI:57692"/>
    </ligand>
</feature>
<feature type="binding site" evidence="3">
    <location>
        <begin position="303"/>
        <end position="306"/>
    </location>
    <ligand>
        <name>FAD</name>
        <dbReference type="ChEBI" id="CHEBI:57692"/>
    </ligand>
</feature>
<feature type="binding site" evidence="3">
    <location>
        <begin position="355"/>
        <end position="361"/>
    </location>
    <ligand>
        <name>FAD</name>
        <dbReference type="ChEBI" id="CHEBI:57692"/>
    </ligand>
</feature>
<feature type="binding site" evidence="3">
    <location>
        <position position="502"/>
    </location>
    <ligand>
        <name>substrate</name>
    </ligand>
</feature>
<feature type="site" description="Important for enzyme activity" evidence="3">
    <location>
        <position position="406"/>
    </location>
</feature>
<feature type="modified residue" description="Phosphoserine" evidence="11">
    <location>
        <position position="52"/>
    </location>
</feature>
<feature type="modified residue" description="Phosphoserine" evidence="9 10 11">
    <location>
        <position position="57"/>
    </location>
</feature>
<feature type="modified residue" description="Phosphothreonine" evidence="2">
    <location>
        <position position="61"/>
    </location>
</feature>
<feature type="modified residue" description="N6-acetyllysine" evidence="2">
    <location>
        <position position="89"/>
    </location>
</feature>
<feature type="modified residue" description="N6-acetyllysine" evidence="2">
    <location>
        <position position="334"/>
    </location>
</feature>
<gene>
    <name type="primary">Agps</name>
</gene>
<name>ADAS_MOUSE</name>